<gene>
    <name evidence="1" type="primary">rpmI</name>
    <name type="ordered locus">Sbal195_2328</name>
</gene>
<keyword id="KW-0687">Ribonucleoprotein</keyword>
<keyword id="KW-0689">Ribosomal protein</keyword>
<sequence>MPKMKTDKGVAKRFKKTANGFKRKQAHLRHILTKKSTKRKRHLRAKCLVSKADVPAIARQLPYA</sequence>
<organism>
    <name type="scientific">Shewanella baltica (strain OS195)</name>
    <dbReference type="NCBI Taxonomy" id="399599"/>
    <lineage>
        <taxon>Bacteria</taxon>
        <taxon>Pseudomonadati</taxon>
        <taxon>Pseudomonadota</taxon>
        <taxon>Gammaproteobacteria</taxon>
        <taxon>Alteromonadales</taxon>
        <taxon>Shewanellaceae</taxon>
        <taxon>Shewanella</taxon>
    </lineage>
</organism>
<dbReference type="EMBL" id="CP000891">
    <property type="protein sequence ID" value="ABX49496.1"/>
    <property type="molecule type" value="Genomic_DNA"/>
</dbReference>
<dbReference type="RefSeq" id="WP_006081653.1">
    <property type="nucleotide sequence ID" value="NC_009997.1"/>
</dbReference>
<dbReference type="SMR" id="A9L2Q7"/>
<dbReference type="GeneID" id="11772455"/>
<dbReference type="KEGG" id="sbn:Sbal195_2328"/>
<dbReference type="HOGENOM" id="CLU_169643_1_1_6"/>
<dbReference type="Proteomes" id="UP000000770">
    <property type="component" value="Chromosome"/>
</dbReference>
<dbReference type="GO" id="GO:0022625">
    <property type="term" value="C:cytosolic large ribosomal subunit"/>
    <property type="evidence" value="ECO:0007669"/>
    <property type="project" value="TreeGrafter"/>
</dbReference>
<dbReference type="GO" id="GO:0003735">
    <property type="term" value="F:structural constituent of ribosome"/>
    <property type="evidence" value="ECO:0007669"/>
    <property type="project" value="InterPro"/>
</dbReference>
<dbReference type="GO" id="GO:0006412">
    <property type="term" value="P:translation"/>
    <property type="evidence" value="ECO:0007669"/>
    <property type="project" value="UniProtKB-UniRule"/>
</dbReference>
<dbReference type="FunFam" id="4.10.410.60:FF:000001">
    <property type="entry name" value="50S ribosomal protein L35"/>
    <property type="match status" value="1"/>
</dbReference>
<dbReference type="Gene3D" id="4.10.410.60">
    <property type="match status" value="1"/>
</dbReference>
<dbReference type="HAMAP" id="MF_00514">
    <property type="entry name" value="Ribosomal_bL35"/>
    <property type="match status" value="1"/>
</dbReference>
<dbReference type="InterPro" id="IPR001706">
    <property type="entry name" value="Ribosomal_bL35"/>
</dbReference>
<dbReference type="InterPro" id="IPR021137">
    <property type="entry name" value="Ribosomal_bL35-like"/>
</dbReference>
<dbReference type="InterPro" id="IPR018265">
    <property type="entry name" value="Ribosomal_bL35_CS"/>
</dbReference>
<dbReference type="InterPro" id="IPR037229">
    <property type="entry name" value="Ribosomal_bL35_sf"/>
</dbReference>
<dbReference type="NCBIfam" id="TIGR00001">
    <property type="entry name" value="rpmI_bact"/>
    <property type="match status" value="1"/>
</dbReference>
<dbReference type="PANTHER" id="PTHR33343">
    <property type="entry name" value="54S RIBOSOMAL PROTEIN BL35M"/>
    <property type="match status" value="1"/>
</dbReference>
<dbReference type="PANTHER" id="PTHR33343:SF1">
    <property type="entry name" value="LARGE RIBOSOMAL SUBUNIT PROTEIN BL35M"/>
    <property type="match status" value="1"/>
</dbReference>
<dbReference type="Pfam" id="PF01632">
    <property type="entry name" value="Ribosomal_L35p"/>
    <property type="match status" value="1"/>
</dbReference>
<dbReference type="PRINTS" id="PR00064">
    <property type="entry name" value="RIBOSOMALL35"/>
</dbReference>
<dbReference type="SUPFAM" id="SSF143034">
    <property type="entry name" value="L35p-like"/>
    <property type="match status" value="1"/>
</dbReference>
<dbReference type="PROSITE" id="PS00936">
    <property type="entry name" value="RIBOSOMAL_L35"/>
    <property type="match status" value="1"/>
</dbReference>
<comment type="similarity">
    <text evidence="1">Belongs to the bacterial ribosomal protein bL35 family.</text>
</comment>
<reference key="1">
    <citation type="submission" date="2007-11" db="EMBL/GenBank/DDBJ databases">
        <title>Complete sequence of chromosome of Shewanella baltica OS195.</title>
        <authorList>
            <consortium name="US DOE Joint Genome Institute"/>
            <person name="Copeland A."/>
            <person name="Lucas S."/>
            <person name="Lapidus A."/>
            <person name="Barry K."/>
            <person name="Glavina del Rio T."/>
            <person name="Dalin E."/>
            <person name="Tice H."/>
            <person name="Pitluck S."/>
            <person name="Chain P."/>
            <person name="Malfatti S."/>
            <person name="Shin M."/>
            <person name="Vergez L."/>
            <person name="Schmutz J."/>
            <person name="Larimer F."/>
            <person name="Land M."/>
            <person name="Hauser L."/>
            <person name="Kyrpides N."/>
            <person name="Kim E."/>
            <person name="Brettar I."/>
            <person name="Rodrigues J."/>
            <person name="Konstantinidis K."/>
            <person name="Klappenbach J."/>
            <person name="Hofle M."/>
            <person name="Tiedje J."/>
            <person name="Richardson P."/>
        </authorList>
    </citation>
    <scope>NUCLEOTIDE SEQUENCE [LARGE SCALE GENOMIC DNA]</scope>
    <source>
        <strain>OS195</strain>
    </source>
</reference>
<proteinExistence type="inferred from homology"/>
<protein>
    <recommendedName>
        <fullName evidence="1">Large ribosomal subunit protein bL35</fullName>
    </recommendedName>
    <alternativeName>
        <fullName evidence="2">50S ribosomal protein L35</fullName>
    </alternativeName>
</protein>
<accession>A9L2Q7</accession>
<name>RL35_SHEB9</name>
<evidence type="ECO:0000255" key="1">
    <source>
        <dbReference type="HAMAP-Rule" id="MF_00514"/>
    </source>
</evidence>
<evidence type="ECO:0000305" key="2"/>
<feature type="chain" id="PRO_1000081626" description="Large ribosomal subunit protein bL35">
    <location>
        <begin position="1"/>
        <end position="64"/>
    </location>
</feature>